<dbReference type="EMBL" id="CP001120">
    <property type="protein sequence ID" value="ACF67231.1"/>
    <property type="molecule type" value="Genomic_DNA"/>
</dbReference>
<dbReference type="RefSeq" id="WP_000358956.1">
    <property type="nucleotide sequence ID" value="NC_011083.1"/>
</dbReference>
<dbReference type="SMR" id="B4TJZ3"/>
<dbReference type="GeneID" id="93035747"/>
<dbReference type="KEGG" id="seh:SeHA_C3728"/>
<dbReference type="HOGENOM" id="CLU_098841_0_1_6"/>
<dbReference type="Proteomes" id="UP000001866">
    <property type="component" value="Chromosome"/>
</dbReference>
<dbReference type="GO" id="GO:0022625">
    <property type="term" value="C:cytosolic large ribosomal subunit"/>
    <property type="evidence" value="ECO:0007669"/>
    <property type="project" value="TreeGrafter"/>
</dbReference>
<dbReference type="GO" id="GO:0008097">
    <property type="term" value="F:5S rRNA binding"/>
    <property type="evidence" value="ECO:0007669"/>
    <property type="project" value="TreeGrafter"/>
</dbReference>
<dbReference type="GO" id="GO:0003735">
    <property type="term" value="F:structural constituent of ribosome"/>
    <property type="evidence" value="ECO:0007669"/>
    <property type="project" value="InterPro"/>
</dbReference>
<dbReference type="GO" id="GO:0006412">
    <property type="term" value="P:translation"/>
    <property type="evidence" value="ECO:0007669"/>
    <property type="project" value="UniProtKB-UniRule"/>
</dbReference>
<dbReference type="CDD" id="cd00432">
    <property type="entry name" value="Ribosomal_L18_L5e"/>
    <property type="match status" value="1"/>
</dbReference>
<dbReference type="FunFam" id="3.30.420.100:FF:000001">
    <property type="entry name" value="50S ribosomal protein L18"/>
    <property type="match status" value="1"/>
</dbReference>
<dbReference type="Gene3D" id="3.30.420.100">
    <property type="match status" value="1"/>
</dbReference>
<dbReference type="HAMAP" id="MF_01337_B">
    <property type="entry name" value="Ribosomal_uL18_B"/>
    <property type="match status" value="1"/>
</dbReference>
<dbReference type="InterPro" id="IPR004389">
    <property type="entry name" value="Ribosomal_uL18_bac-type"/>
</dbReference>
<dbReference type="InterPro" id="IPR005484">
    <property type="entry name" value="Ribosomal_uL18_bac/euk"/>
</dbReference>
<dbReference type="NCBIfam" id="TIGR00060">
    <property type="entry name" value="L18_bact"/>
    <property type="match status" value="1"/>
</dbReference>
<dbReference type="PANTHER" id="PTHR12899">
    <property type="entry name" value="39S RIBOSOMAL PROTEIN L18, MITOCHONDRIAL"/>
    <property type="match status" value="1"/>
</dbReference>
<dbReference type="PANTHER" id="PTHR12899:SF3">
    <property type="entry name" value="LARGE RIBOSOMAL SUBUNIT PROTEIN UL18M"/>
    <property type="match status" value="1"/>
</dbReference>
<dbReference type="Pfam" id="PF00861">
    <property type="entry name" value="Ribosomal_L18p"/>
    <property type="match status" value="1"/>
</dbReference>
<dbReference type="SUPFAM" id="SSF53137">
    <property type="entry name" value="Translational machinery components"/>
    <property type="match status" value="1"/>
</dbReference>
<name>RL18_SALHS</name>
<feature type="chain" id="PRO_1000142715" description="Large ribosomal subunit protein uL18">
    <location>
        <begin position="1"/>
        <end position="117"/>
    </location>
</feature>
<proteinExistence type="inferred from homology"/>
<protein>
    <recommendedName>
        <fullName evidence="1">Large ribosomal subunit protein uL18</fullName>
    </recommendedName>
    <alternativeName>
        <fullName evidence="2">50S ribosomal protein L18</fullName>
    </alternativeName>
</protein>
<organism>
    <name type="scientific">Salmonella heidelberg (strain SL476)</name>
    <dbReference type="NCBI Taxonomy" id="454169"/>
    <lineage>
        <taxon>Bacteria</taxon>
        <taxon>Pseudomonadati</taxon>
        <taxon>Pseudomonadota</taxon>
        <taxon>Gammaproteobacteria</taxon>
        <taxon>Enterobacterales</taxon>
        <taxon>Enterobacteriaceae</taxon>
        <taxon>Salmonella</taxon>
    </lineage>
</organism>
<reference key="1">
    <citation type="journal article" date="2011" name="J. Bacteriol.">
        <title>Comparative genomics of 28 Salmonella enterica isolates: evidence for CRISPR-mediated adaptive sublineage evolution.</title>
        <authorList>
            <person name="Fricke W.F."/>
            <person name="Mammel M.K."/>
            <person name="McDermott P.F."/>
            <person name="Tartera C."/>
            <person name="White D.G."/>
            <person name="Leclerc J.E."/>
            <person name="Ravel J."/>
            <person name="Cebula T.A."/>
        </authorList>
    </citation>
    <scope>NUCLEOTIDE SEQUENCE [LARGE SCALE GENOMIC DNA]</scope>
    <source>
        <strain>SL476</strain>
    </source>
</reference>
<gene>
    <name evidence="1" type="primary">rplR</name>
    <name type="ordered locus">SeHA_C3728</name>
</gene>
<comment type="function">
    <text evidence="1">This is one of the proteins that bind and probably mediate the attachment of the 5S RNA into the large ribosomal subunit, where it forms part of the central protuberance.</text>
</comment>
<comment type="subunit">
    <text evidence="1">Part of the 50S ribosomal subunit; part of the 5S rRNA/L5/L18/L25 subcomplex. Contacts the 5S and 23S rRNAs.</text>
</comment>
<comment type="similarity">
    <text evidence="1">Belongs to the universal ribosomal protein uL18 family.</text>
</comment>
<evidence type="ECO:0000255" key="1">
    <source>
        <dbReference type="HAMAP-Rule" id="MF_01337"/>
    </source>
</evidence>
<evidence type="ECO:0000305" key="2"/>
<accession>B4TJZ3</accession>
<keyword id="KW-0687">Ribonucleoprotein</keyword>
<keyword id="KW-0689">Ribosomal protein</keyword>
<keyword id="KW-0694">RNA-binding</keyword>
<keyword id="KW-0699">rRNA-binding</keyword>
<sequence>MDKKSARIRRATRARRKLKELGATRLVVHRTPRHIYAQVIAPNGSEVLVAASTVEKAIAEQLKYTGNKDAAAAVGKAVAERALEKGIKDVSFDRSGFQYHGRVQALADAAREAGLQF</sequence>